<gene>
    <name evidence="2" type="primary">mutM</name>
    <name evidence="2" type="synonym">fpg</name>
    <name type="ordered locus">ECH74115_5005</name>
</gene>
<accession>B5YWD3</accession>
<evidence type="ECO:0000250" key="1"/>
<evidence type="ECO:0000255" key="2">
    <source>
        <dbReference type="HAMAP-Rule" id="MF_00103"/>
    </source>
</evidence>
<dbReference type="EC" id="3.2.2.23" evidence="2"/>
<dbReference type="EC" id="4.2.99.18" evidence="2"/>
<dbReference type="EMBL" id="CP001164">
    <property type="protein sequence ID" value="ACI37701.1"/>
    <property type="molecule type" value="Genomic_DNA"/>
</dbReference>
<dbReference type="RefSeq" id="WP_001114533.1">
    <property type="nucleotide sequence ID" value="NC_011353.1"/>
</dbReference>
<dbReference type="SMR" id="B5YWD3"/>
<dbReference type="GeneID" id="93778348"/>
<dbReference type="KEGG" id="ecf:ECH74115_5005"/>
<dbReference type="HOGENOM" id="CLU_038423_1_1_6"/>
<dbReference type="GO" id="GO:0034039">
    <property type="term" value="F:8-oxo-7,8-dihydroguanine DNA N-glycosylase activity"/>
    <property type="evidence" value="ECO:0007669"/>
    <property type="project" value="TreeGrafter"/>
</dbReference>
<dbReference type="GO" id="GO:0140078">
    <property type="term" value="F:class I DNA-(apurinic or apyrimidinic site) endonuclease activity"/>
    <property type="evidence" value="ECO:0007669"/>
    <property type="project" value="UniProtKB-EC"/>
</dbReference>
<dbReference type="GO" id="GO:0003684">
    <property type="term" value="F:damaged DNA binding"/>
    <property type="evidence" value="ECO:0007669"/>
    <property type="project" value="InterPro"/>
</dbReference>
<dbReference type="GO" id="GO:0008270">
    <property type="term" value="F:zinc ion binding"/>
    <property type="evidence" value="ECO:0007669"/>
    <property type="project" value="UniProtKB-UniRule"/>
</dbReference>
<dbReference type="GO" id="GO:0006284">
    <property type="term" value="P:base-excision repair"/>
    <property type="evidence" value="ECO:0007669"/>
    <property type="project" value="InterPro"/>
</dbReference>
<dbReference type="CDD" id="cd08966">
    <property type="entry name" value="EcFpg-like_N"/>
    <property type="match status" value="1"/>
</dbReference>
<dbReference type="FunFam" id="1.10.8.50:FF:000003">
    <property type="entry name" value="Formamidopyrimidine-DNA glycosylase"/>
    <property type="match status" value="1"/>
</dbReference>
<dbReference type="FunFam" id="3.20.190.10:FF:000001">
    <property type="entry name" value="Formamidopyrimidine-DNA glycosylase"/>
    <property type="match status" value="1"/>
</dbReference>
<dbReference type="Gene3D" id="1.10.8.50">
    <property type="match status" value="1"/>
</dbReference>
<dbReference type="Gene3D" id="3.20.190.10">
    <property type="entry name" value="MutM-like, N-terminal"/>
    <property type="match status" value="1"/>
</dbReference>
<dbReference type="HAMAP" id="MF_00103">
    <property type="entry name" value="Fapy_DNA_glycosyl"/>
    <property type="match status" value="1"/>
</dbReference>
<dbReference type="InterPro" id="IPR015886">
    <property type="entry name" value="DNA_glyclase/AP_lyase_DNA-bd"/>
</dbReference>
<dbReference type="InterPro" id="IPR015887">
    <property type="entry name" value="DNA_glyclase_Znf_dom_DNA_BS"/>
</dbReference>
<dbReference type="InterPro" id="IPR020629">
    <property type="entry name" value="Formamido-pyr_DNA_Glyclase"/>
</dbReference>
<dbReference type="InterPro" id="IPR012319">
    <property type="entry name" value="FPG_cat"/>
</dbReference>
<dbReference type="InterPro" id="IPR035937">
    <property type="entry name" value="MutM-like_N-ter"/>
</dbReference>
<dbReference type="InterPro" id="IPR010979">
    <property type="entry name" value="Ribosomal_uS13-like_H2TH"/>
</dbReference>
<dbReference type="InterPro" id="IPR000214">
    <property type="entry name" value="Znf_DNA_glyclase/AP_lyase"/>
</dbReference>
<dbReference type="InterPro" id="IPR010663">
    <property type="entry name" value="Znf_FPG/IleRS"/>
</dbReference>
<dbReference type="NCBIfam" id="TIGR00577">
    <property type="entry name" value="fpg"/>
    <property type="match status" value="1"/>
</dbReference>
<dbReference type="NCBIfam" id="NF002211">
    <property type="entry name" value="PRK01103.1"/>
    <property type="match status" value="1"/>
</dbReference>
<dbReference type="PANTHER" id="PTHR22993">
    <property type="entry name" value="FORMAMIDOPYRIMIDINE-DNA GLYCOSYLASE"/>
    <property type="match status" value="1"/>
</dbReference>
<dbReference type="PANTHER" id="PTHR22993:SF9">
    <property type="entry name" value="FORMAMIDOPYRIMIDINE-DNA GLYCOSYLASE"/>
    <property type="match status" value="1"/>
</dbReference>
<dbReference type="Pfam" id="PF01149">
    <property type="entry name" value="Fapy_DNA_glyco"/>
    <property type="match status" value="1"/>
</dbReference>
<dbReference type="Pfam" id="PF06831">
    <property type="entry name" value="H2TH"/>
    <property type="match status" value="1"/>
</dbReference>
<dbReference type="Pfam" id="PF06827">
    <property type="entry name" value="zf-FPG_IleRS"/>
    <property type="match status" value="1"/>
</dbReference>
<dbReference type="SMART" id="SM00898">
    <property type="entry name" value="Fapy_DNA_glyco"/>
    <property type="match status" value="1"/>
</dbReference>
<dbReference type="SMART" id="SM01232">
    <property type="entry name" value="H2TH"/>
    <property type="match status" value="1"/>
</dbReference>
<dbReference type="SUPFAM" id="SSF57716">
    <property type="entry name" value="Glucocorticoid receptor-like (DNA-binding domain)"/>
    <property type="match status" value="1"/>
</dbReference>
<dbReference type="SUPFAM" id="SSF81624">
    <property type="entry name" value="N-terminal domain of MutM-like DNA repair proteins"/>
    <property type="match status" value="1"/>
</dbReference>
<dbReference type="SUPFAM" id="SSF46946">
    <property type="entry name" value="S13-like H2TH domain"/>
    <property type="match status" value="1"/>
</dbReference>
<dbReference type="PROSITE" id="PS51068">
    <property type="entry name" value="FPG_CAT"/>
    <property type="match status" value="1"/>
</dbReference>
<dbReference type="PROSITE" id="PS01242">
    <property type="entry name" value="ZF_FPG_1"/>
    <property type="match status" value="1"/>
</dbReference>
<dbReference type="PROSITE" id="PS51066">
    <property type="entry name" value="ZF_FPG_2"/>
    <property type="match status" value="1"/>
</dbReference>
<reference key="1">
    <citation type="journal article" date="2011" name="Proc. Natl. Acad. Sci. U.S.A.">
        <title>Genomic anatomy of Escherichia coli O157:H7 outbreaks.</title>
        <authorList>
            <person name="Eppinger M."/>
            <person name="Mammel M.K."/>
            <person name="Leclerc J.E."/>
            <person name="Ravel J."/>
            <person name="Cebula T.A."/>
        </authorList>
    </citation>
    <scope>NUCLEOTIDE SEQUENCE [LARGE SCALE GENOMIC DNA]</scope>
    <source>
        <strain>EC4115 / EHEC</strain>
    </source>
</reference>
<feature type="initiator methionine" description="Removed" evidence="1">
    <location>
        <position position="1"/>
    </location>
</feature>
<feature type="chain" id="PRO_1000094042" description="Formamidopyrimidine-DNA glycosylase">
    <location>
        <begin position="2"/>
        <end position="269"/>
    </location>
</feature>
<feature type="zinc finger region" description="FPG-type" evidence="2">
    <location>
        <begin position="235"/>
        <end position="269"/>
    </location>
</feature>
<feature type="active site" description="Schiff-base intermediate with DNA" evidence="2">
    <location>
        <position position="2"/>
    </location>
</feature>
<feature type="active site" description="Proton donor" evidence="2">
    <location>
        <position position="3"/>
    </location>
</feature>
<feature type="active site" description="Proton donor; for beta-elimination activity" evidence="2">
    <location>
        <position position="57"/>
    </location>
</feature>
<feature type="active site" description="Proton donor; for delta-elimination activity" evidence="2">
    <location>
        <position position="259"/>
    </location>
</feature>
<feature type="binding site" evidence="2">
    <location>
        <position position="90"/>
    </location>
    <ligand>
        <name>DNA</name>
        <dbReference type="ChEBI" id="CHEBI:16991"/>
    </ligand>
</feature>
<feature type="binding site" evidence="2">
    <location>
        <position position="109"/>
    </location>
    <ligand>
        <name>DNA</name>
        <dbReference type="ChEBI" id="CHEBI:16991"/>
    </ligand>
</feature>
<feature type="binding site" evidence="2">
    <location>
        <position position="150"/>
    </location>
    <ligand>
        <name>DNA</name>
        <dbReference type="ChEBI" id="CHEBI:16991"/>
    </ligand>
</feature>
<name>FPG_ECO5E</name>
<proteinExistence type="inferred from homology"/>
<comment type="function">
    <text evidence="2">Involved in base excision repair of DNA damaged by oxidation or by mutagenic agents. Acts as a DNA glycosylase that recognizes and removes damaged bases. Has a preference for oxidized purines, such as 7,8-dihydro-8-oxoguanine (8-oxoG). Has AP (apurinic/apyrimidinic) lyase activity and introduces nicks in the DNA strand. Cleaves the DNA backbone by beta-delta elimination to generate a single-strand break at the site of the removed base with both 3'- and 5'-phosphates.</text>
</comment>
<comment type="catalytic activity">
    <reaction evidence="2">
        <text>Hydrolysis of DNA containing ring-opened 7-methylguanine residues, releasing 2,6-diamino-4-hydroxy-5-(N-methyl)formamidopyrimidine.</text>
        <dbReference type="EC" id="3.2.2.23"/>
    </reaction>
</comment>
<comment type="catalytic activity">
    <reaction evidence="2">
        <text>2'-deoxyribonucleotide-(2'-deoxyribose 5'-phosphate)-2'-deoxyribonucleotide-DNA = a 3'-end 2'-deoxyribonucleotide-(2,3-dehydro-2,3-deoxyribose 5'-phosphate)-DNA + a 5'-end 5'-phospho-2'-deoxyribonucleoside-DNA + H(+)</text>
        <dbReference type="Rhea" id="RHEA:66592"/>
        <dbReference type="Rhea" id="RHEA-COMP:13180"/>
        <dbReference type="Rhea" id="RHEA-COMP:16897"/>
        <dbReference type="Rhea" id="RHEA-COMP:17067"/>
        <dbReference type="ChEBI" id="CHEBI:15378"/>
        <dbReference type="ChEBI" id="CHEBI:136412"/>
        <dbReference type="ChEBI" id="CHEBI:157695"/>
        <dbReference type="ChEBI" id="CHEBI:167181"/>
        <dbReference type="EC" id="4.2.99.18"/>
    </reaction>
</comment>
<comment type="cofactor">
    <cofactor evidence="2">
        <name>Zn(2+)</name>
        <dbReference type="ChEBI" id="CHEBI:29105"/>
    </cofactor>
    <text evidence="2">Binds 1 zinc ion per subunit.</text>
</comment>
<comment type="subunit">
    <text evidence="2">Monomer.</text>
</comment>
<comment type="similarity">
    <text evidence="2">Belongs to the FPG family.</text>
</comment>
<protein>
    <recommendedName>
        <fullName evidence="2">Formamidopyrimidine-DNA glycosylase</fullName>
        <shortName evidence="2">Fapy-DNA glycosylase</shortName>
        <ecNumber evidence="2">3.2.2.23</ecNumber>
    </recommendedName>
    <alternativeName>
        <fullName evidence="2">DNA-(apurinic or apyrimidinic site) lyase MutM</fullName>
        <shortName evidence="2">AP lyase MutM</shortName>
        <ecNumber evidence="2">4.2.99.18</ecNumber>
    </alternativeName>
</protein>
<keyword id="KW-0227">DNA damage</keyword>
<keyword id="KW-0234">DNA repair</keyword>
<keyword id="KW-0238">DNA-binding</keyword>
<keyword id="KW-0326">Glycosidase</keyword>
<keyword id="KW-0378">Hydrolase</keyword>
<keyword id="KW-0456">Lyase</keyword>
<keyword id="KW-0479">Metal-binding</keyword>
<keyword id="KW-0511">Multifunctional enzyme</keyword>
<keyword id="KW-0862">Zinc</keyword>
<keyword id="KW-0863">Zinc-finger</keyword>
<sequence length="269" mass="30260">MPELPEVETSRRGIEPHLVGATILHAVVRNGRLRWPVSEEIYRLSDQPVLSVQRRAKYLLLELPEGWIIIHLGMSGSLRILPEELPPEKHDHVDLVMSNGKVLRYTDPRRFGAWLWTKELEGHNVLAHLGPEPLSDDFNGEYLHQKCAKKKTAIKPWLMDNKLVVGVGNIYASESLFAAGIHPDRLASSLSLAECELLARVIKAVLLRSIEQGGTTLKDFLQSDGKPGYFAQELQVYGRKGEPCRVCGTPIVATKHAQRATFYCRQCQK</sequence>
<organism>
    <name type="scientific">Escherichia coli O157:H7 (strain EC4115 / EHEC)</name>
    <dbReference type="NCBI Taxonomy" id="444450"/>
    <lineage>
        <taxon>Bacteria</taxon>
        <taxon>Pseudomonadati</taxon>
        <taxon>Pseudomonadota</taxon>
        <taxon>Gammaproteobacteria</taxon>
        <taxon>Enterobacterales</taxon>
        <taxon>Enterobacteriaceae</taxon>
        <taxon>Escherichia</taxon>
    </lineage>
</organism>